<accession>F4HQ22</accession>
<accession>Q9C621</accession>
<feature type="signal peptide" evidence="2">
    <location>
        <begin position="1"/>
        <end position="26"/>
    </location>
</feature>
<feature type="chain" id="PRO_5003309388" description="LEAF RUST 10 DISEASE-RESISTANCE LOCUS RECEPTOR-LIKE PROTEIN KINASE-like 2.4">
    <location>
        <begin position="27"/>
        <end position="617"/>
    </location>
</feature>
<feature type="topological domain" description="Extracellular" evidence="6">
    <location>
        <begin position="27"/>
        <end position="243"/>
    </location>
</feature>
<feature type="transmembrane region" description="Helical" evidence="2">
    <location>
        <begin position="244"/>
        <end position="264"/>
    </location>
</feature>
<feature type="topological domain" description="Cytoplasmic" evidence="6">
    <location>
        <begin position="265"/>
        <end position="617"/>
    </location>
</feature>
<feature type="domain" description="Protein kinase" evidence="3">
    <location>
        <begin position="307"/>
        <end position="594"/>
    </location>
</feature>
<feature type="active site" description="Proton acceptor" evidence="3">
    <location>
        <position position="431"/>
    </location>
</feature>
<feature type="binding site" evidence="3">
    <location>
        <begin position="313"/>
        <end position="321"/>
    </location>
    <ligand>
        <name>ATP</name>
        <dbReference type="ChEBI" id="CHEBI:30616"/>
    </ligand>
</feature>
<feature type="binding site" evidence="3">
    <location>
        <position position="335"/>
    </location>
    <ligand>
        <name>ATP</name>
        <dbReference type="ChEBI" id="CHEBI:30616"/>
    </ligand>
</feature>
<feature type="modified residue" description="Phosphotyrosine" evidence="1">
    <location>
        <position position="380"/>
    </location>
</feature>
<feature type="modified residue" description="Phosphothreonine" evidence="1">
    <location>
        <position position="468"/>
    </location>
</feature>
<feature type="modified residue" description="Phosphothreonine" evidence="1">
    <location>
        <position position="471"/>
    </location>
</feature>
<feature type="glycosylation site" description="N-linked (GlcNAc...) asparagine" evidence="4">
    <location>
        <position position="41"/>
    </location>
</feature>
<feature type="glycosylation site" description="N-linked (GlcNAc...) asparagine" evidence="4">
    <location>
        <position position="69"/>
    </location>
</feature>
<feature type="glycosylation site" description="N-linked (GlcNAc...) asparagine" evidence="4">
    <location>
        <position position="86"/>
    </location>
</feature>
<feature type="glycosylation site" description="N-linked (GlcNAc...) asparagine" evidence="4">
    <location>
        <position position="112"/>
    </location>
</feature>
<feature type="glycosylation site" description="N-linked (GlcNAc...) asparagine" evidence="4">
    <location>
        <position position="184"/>
    </location>
</feature>
<feature type="splice variant" id="VSP_058195" description="In isoform 2.">
    <original>RLSSEAKIA</original>
    <variation>P</variation>
    <location>
        <begin position="237"/>
        <end position="245"/>
    </location>
</feature>
<comment type="catalytic activity">
    <reaction>
        <text>L-seryl-[protein] + ATP = O-phospho-L-seryl-[protein] + ADP + H(+)</text>
        <dbReference type="Rhea" id="RHEA:17989"/>
        <dbReference type="Rhea" id="RHEA-COMP:9863"/>
        <dbReference type="Rhea" id="RHEA-COMP:11604"/>
        <dbReference type="ChEBI" id="CHEBI:15378"/>
        <dbReference type="ChEBI" id="CHEBI:29999"/>
        <dbReference type="ChEBI" id="CHEBI:30616"/>
        <dbReference type="ChEBI" id="CHEBI:83421"/>
        <dbReference type="ChEBI" id="CHEBI:456216"/>
        <dbReference type="EC" id="2.7.11.1"/>
    </reaction>
</comment>
<comment type="catalytic activity">
    <reaction>
        <text>L-threonyl-[protein] + ATP = O-phospho-L-threonyl-[protein] + ADP + H(+)</text>
        <dbReference type="Rhea" id="RHEA:46608"/>
        <dbReference type="Rhea" id="RHEA-COMP:11060"/>
        <dbReference type="Rhea" id="RHEA-COMP:11605"/>
        <dbReference type="ChEBI" id="CHEBI:15378"/>
        <dbReference type="ChEBI" id="CHEBI:30013"/>
        <dbReference type="ChEBI" id="CHEBI:30616"/>
        <dbReference type="ChEBI" id="CHEBI:61977"/>
        <dbReference type="ChEBI" id="CHEBI:456216"/>
        <dbReference type="EC" id="2.7.11.1"/>
    </reaction>
</comment>
<comment type="subcellular location">
    <subcellularLocation>
        <location evidence="2">Membrane</location>
        <topology evidence="6">Single-pass type I membrane protein</topology>
    </subcellularLocation>
</comment>
<comment type="alternative products">
    <event type="alternative splicing"/>
    <isoform>
        <id>F4HQ22-1</id>
        <name>1</name>
        <sequence type="displayed"/>
    </isoform>
    <isoform>
        <id>F4HQ22-2</id>
        <name>2</name>
        <sequence type="described" ref="VSP_058195"/>
    </isoform>
</comment>
<comment type="similarity">
    <text evidence="3">Belongs to the protein kinase superfamily. Ser/Thr protein kinase family.</text>
</comment>
<reference key="1">
    <citation type="journal article" date="2000" name="Nature">
        <title>Sequence and analysis of chromosome 1 of the plant Arabidopsis thaliana.</title>
        <authorList>
            <person name="Theologis A."/>
            <person name="Ecker J.R."/>
            <person name="Palm C.J."/>
            <person name="Federspiel N.A."/>
            <person name="Kaul S."/>
            <person name="White O."/>
            <person name="Alonso J."/>
            <person name="Altafi H."/>
            <person name="Araujo R."/>
            <person name="Bowman C.L."/>
            <person name="Brooks S.Y."/>
            <person name="Buehler E."/>
            <person name="Chan A."/>
            <person name="Chao Q."/>
            <person name="Chen H."/>
            <person name="Cheuk R.F."/>
            <person name="Chin C.W."/>
            <person name="Chung M.K."/>
            <person name="Conn L."/>
            <person name="Conway A.B."/>
            <person name="Conway A.R."/>
            <person name="Creasy T.H."/>
            <person name="Dewar K."/>
            <person name="Dunn P."/>
            <person name="Etgu P."/>
            <person name="Feldblyum T.V."/>
            <person name="Feng J.-D."/>
            <person name="Fong B."/>
            <person name="Fujii C.Y."/>
            <person name="Gill J.E."/>
            <person name="Goldsmith A.D."/>
            <person name="Haas B."/>
            <person name="Hansen N.F."/>
            <person name="Hughes B."/>
            <person name="Huizar L."/>
            <person name="Hunter J.L."/>
            <person name="Jenkins J."/>
            <person name="Johnson-Hopson C."/>
            <person name="Khan S."/>
            <person name="Khaykin E."/>
            <person name="Kim C.J."/>
            <person name="Koo H.L."/>
            <person name="Kremenetskaia I."/>
            <person name="Kurtz D.B."/>
            <person name="Kwan A."/>
            <person name="Lam B."/>
            <person name="Langin-Hooper S."/>
            <person name="Lee A."/>
            <person name="Lee J.M."/>
            <person name="Lenz C.A."/>
            <person name="Li J.H."/>
            <person name="Li Y.-P."/>
            <person name="Lin X."/>
            <person name="Liu S.X."/>
            <person name="Liu Z.A."/>
            <person name="Luros J.S."/>
            <person name="Maiti R."/>
            <person name="Marziali A."/>
            <person name="Militscher J."/>
            <person name="Miranda M."/>
            <person name="Nguyen M."/>
            <person name="Nierman W.C."/>
            <person name="Osborne B.I."/>
            <person name="Pai G."/>
            <person name="Peterson J."/>
            <person name="Pham P.K."/>
            <person name="Rizzo M."/>
            <person name="Rooney T."/>
            <person name="Rowley D."/>
            <person name="Sakano H."/>
            <person name="Salzberg S.L."/>
            <person name="Schwartz J.R."/>
            <person name="Shinn P."/>
            <person name="Southwick A.M."/>
            <person name="Sun H."/>
            <person name="Tallon L.J."/>
            <person name="Tambunga G."/>
            <person name="Toriumi M.J."/>
            <person name="Town C.D."/>
            <person name="Utterback T."/>
            <person name="Van Aken S."/>
            <person name="Vaysberg M."/>
            <person name="Vysotskaia V.S."/>
            <person name="Walker M."/>
            <person name="Wu D."/>
            <person name="Yu G."/>
            <person name="Fraser C.M."/>
            <person name="Venter J.C."/>
            <person name="Davis R.W."/>
        </authorList>
    </citation>
    <scope>NUCLEOTIDE SEQUENCE [LARGE SCALE GENOMIC DNA]</scope>
    <source>
        <strain>cv. Columbia</strain>
    </source>
</reference>
<reference key="2">
    <citation type="journal article" date="2017" name="Plant J.">
        <title>Araport11: a complete reannotation of the Arabidopsis thaliana reference genome.</title>
        <authorList>
            <person name="Cheng C.Y."/>
            <person name="Krishnakumar V."/>
            <person name="Chan A.P."/>
            <person name="Thibaud-Nissen F."/>
            <person name="Schobel S."/>
            <person name="Town C.D."/>
        </authorList>
    </citation>
    <scope>GENOME REANNOTATION</scope>
    <source>
        <strain>cv. Columbia</strain>
    </source>
</reference>
<reference key="3">
    <citation type="journal article" date="2001" name="Proc. Natl. Acad. Sci. U.S.A.">
        <title>Receptor-like kinases from Arabidopsis form a monophyletic gene family related to animal receptor kinases.</title>
        <authorList>
            <person name="Shiu S.H."/>
            <person name="Bleecker A.B."/>
        </authorList>
    </citation>
    <scope>GENE FAMILY</scope>
</reference>
<reference key="4">
    <citation type="journal article" date="2003" name="Plant Physiol.">
        <title>Expansion of the receptor-like kinase/Pelle gene family and receptor-like proteins in Arabidopsis.</title>
        <authorList>
            <person name="Shiu S.H."/>
            <person name="Bleecker A.B."/>
        </authorList>
    </citation>
    <scope>GENE FAMILY</scope>
</reference>
<protein>
    <recommendedName>
        <fullName evidence="5">LEAF RUST 10 DISEASE-RESISTANCE LOCUS RECEPTOR-LIKE PROTEIN KINASE-like 2.4</fullName>
        <ecNumber>2.7.11.1</ecNumber>
    </recommendedName>
    <alternativeName>
        <fullName evidence="6">Probable receptor-like serine/threonine-protein kinase LRK10L-2.4</fullName>
    </alternativeName>
</protein>
<keyword id="KW-0025">Alternative splicing</keyword>
<keyword id="KW-0067">ATP-binding</keyword>
<keyword id="KW-0325">Glycoprotein</keyword>
<keyword id="KW-0418">Kinase</keyword>
<keyword id="KW-0472">Membrane</keyword>
<keyword id="KW-0547">Nucleotide-binding</keyword>
<keyword id="KW-0597">Phosphoprotein</keyword>
<keyword id="KW-0675">Receptor</keyword>
<keyword id="KW-1185">Reference proteome</keyword>
<keyword id="KW-0723">Serine/threonine-protein kinase</keyword>
<keyword id="KW-0732">Signal</keyword>
<keyword id="KW-0808">Transferase</keyword>
<keyword id="KW-0812">Transmembrane</keyword>
<keyword id="KW-1133">Transmembrane helix</keyword>
<evidence type="ECO:0000250" key="1">
    <source>
        <dbReference type="UniProtKB" id="O48814"/>
    </source>
</evidence>
<evidence type="ECO:0000255" key="2"/>
<evidence type="ECO:0000255" key="3">
    <source>
        <dbReference type="PROSITE-ProRule" id="PRU00159"/>
    </source>
</evidence>
<evidence type="ECO:0000255" key="4">
    <source>
        <dbReference type="PROSITE-ProRule" id="PRU00498"/>
    </source>
</evidence>
<evidence type="ECO:0000303" key="5">
    <source>
    </source>
</evidence>
<evidence type="ECO:0000305" key="6"/>
<evidence type="ECO:0000312" key="7">
    <source>
        <dbReference type="Araport" id="AT1G66920"/>
    </source>
</evidence>
<evidence type="ECO:0000312" key="8">
    <source>
        <dbReference type="EMBL" id="AAG50589.1"/>
    </source>
</evidence>
<name>LRL24_ARATH</name>
<dbReference type="EC" id="2.7.11.1"/>
<dbReference type="EMBL" id="AC083891">
    <property type="protein sequence ID" value="AAG50589.1"/>
    <property type="molecule type" value="Genomic_DNA"/>
</dbReference>
<dbReference type="EMBL" id="CP002684">
    <property type="protein sequence ID" value="AEE34571.1"/>
    <property type="molecule type" value="Genomic_DNA"/>
</dbReference>
<dbReference type="EMBL" id="CP002684">
    <property type="protein sequence ID" value="AEE34572.1"/>
    <property type="molecule type" value="Genomic_DNA"/>
</dbReference>
<dbReference type="PIR" id="A96693">
    <property type="entry name" value="A96693"/>
</dbReference>
<dbReference type="RefSeq" id="NP_001185332.1">
    <molecule id="F4HQ22-1"/>
    <property type="nucleotide sequence ID" value="NM_001198403.2"/>
</dbReference>
<dbReference type="RefSeq" id="NP_176864.1">
    <molecule id="F4HQ22-2"/>
    <property type="nucleotide sequence ID" value="NM_105363.2"/>
</dbReference>
<dbReference type="SMR" id="F4HQ22"/>
<dbReference type="FunCoup" id="F4HQ22">
    <property type="interactions" value="21"/>
</dbReference>
<dbReference type="IntAct" id="F4HQ22">
    <property type="interactions" value="1"/>
</dbReference>
<dbReference type="STRING" id="3702.F4HQ22"/>
<dbReference type="GlyCosmos" id="F4HQ22">
    <property type="glycosylation" value="5 sites, No reported glycans"/>
</dbReference>
<dbReference type="GlyGen" id="F4HQ22">
    <property type="glycosylation" value="5 sites"/>
</dbReference>
<dbReference type="iPTMnet" id="F4HQ22"/>
<dbReference type="PaxDb" id="3702-AT1G66920.2"/>
<dbReference type="ProteomicsDB" id="238390">
    <molecule id="F4HQ22-1"/>
</dbReference>
<dbReference type="EnsemblPlants" id="AT1G66920.1">
    <molecule id="F4HQ22-2"/>
    <property type="protein sequence ID" value="AT1G66920.1"/>
    <property type="gene ID" value="AT1G66920"/>
</dbReference>
<dbReference type="EnsemblPlants" id="AT1G66920.2">
    <molecule id="F4HQ22-1"/>
    <property type="protein sequence ID" value="AT1G66920.2"/>
    <property type="gene ID" value="AT1G66920"/>
</dbReference>
<dbReference type="GeneID" id="843010"/>
<dbReference type="Gramene" id="AT1G66920.1">
    <molecule id="F4HQ22-2"/>
    <property type="protein sequence ID" value="AT1G66920.1"/>
    <property type="gene ID" value="AT1G66920"/>
</dbReference>
<dbReference type="Gramene" id="AT1G66920.2">
    <molecule id="F4HQ22-1"/>
    <property type="protein sequence ID" value="AT1G66920.2"/>
    <property type="gene ID" value="AT1G66920"/>
</dbReference>
<dbReference type="KEGG" id="ath:AT1G66920"/>
<dbReference type="Araport" id="AT1G66920"/>
<dbReference type="TAIR" id="AT1G66920"/>
<dbReference type="eggNOG" id="KOG1187">
    <property type="taxonomic scope" value="Eukaryota"/>
</dbReference>
<dbReference type="InParanoid" id="F4HQ22"/>
<dbReference type="OMA" id="PISCEAR"/>
<dbReference type="PRO" id="PR:F4HQ22"/>
<dbReference type="Proteomes" id="UP000006548">
    <property type="component" value="Chromosome 1"/>
</dbReference>
<dbReference type="ExpressionAtlas" id="F4HQ22">
    <property type="expression patterns" value="baseline and differential"/>
</dbReference>
<dbReference type="GO" id="GO:0016020">
    <property type="term" value="C:membrane"/>
    <property type="evidence" value="ECO:0007669"/>
    <property type="project" value="UniProtKB-SubCell"/>
</dbReference>
<dbReference type="GO" id="GO:0005524">
    <property type="term" value="F:ATP binding"/>
    <property type="evidence" value="ECO:0007669"/>
    <property type="project" value="UniProtKB-KW"/>
</dbReference>
<dbReference type="GO" id="GO:0030247">
    <property type="term" value="F:polysaccharide binding"/>
    <property type="evidence" value="ECO:0007669"/>
    <property type="project" value="InterPro"/>
</dbReference>
<dbReference type="GO" id="GO:0106310">
    <property type="term" value="F:protein serine kinase activity"/>
    <property type="evidence" value="ECO:0007669"/>
    <property type="project" value="RHEA"/>
</dbReference>
<dbReference type="GO" id="GO:0004674">
    <property type="term" value="F:protein serine/threonine kinase activity"/>
    <property type="evidence" value="ECO:0007669"/>
    <property type="project" value="UniProtKB-KW"/>
</dbReference>
<dbReference type="FunFam" id="1.10.510.10:FF:000590">
    <property type="entry name" value="PR5-like receptor kinase"/>
    <property type="match status" value="1"/>
</dbReference>
<dbReference type="FunFam" id="3.30.200.20:FF:000644">
    <property type="entry name" value="Suppressor of npr1-1 constitutive 4"/>
    <property type="match status" value="1"/>
</dbReference>
<dbReference type="Gene3D" id="3.30.200.20">
    <property type="entry name" value="Phosphorylase Kinase, domain 1"/>
    <property type="match status" value="1"/>
</dbReference>
<dbReference type="Gene3D" id="1.10.510.10">
    <property type="entry name" value="Transferase(Phosphotransferase) domain 1"/>
    <property type="match status" value="1"/>
</dbReference>
<dbReference type="InterPro" id="IPR011009">
    <property type="entry name" value="Kinase-like_dom_sf"/>
</dbReference>
<dbReference type="InterPro" id="IPR045874">
    <property type="entry name" value="LRK10/LRL21-25-like"/>
</dbReference>
<dbReference type="InterPro" id="IPR000719">
    <property type="entry name" value="Prot_kinase_dom"/>
</dbReference>
<dbReference type="InterPro" id="IPR017441">
    <property type="entry name" value="Protein_kinase_ATP_BS"/>
</dbReference>
<dbReference type="InterPro" id="IPR008271">
    <property type="entry name" value="Ser/Thr_kinase_AS"/>
</dbReference>
<dbReference type="InterPro" id="IPR032872">
    <property type="entry name" value="WAK_assoc_C"/>
</dbReference>
<dbReference type="InterPro" id="IPR025287">
    <property type="entry name" value="WAK_GUB"/>
</dbReference>
<dbReference type="PANTHER" id="PTHR27009">
    <property type="entry name" value="RUST RESISTANCE KINASE LR10-RELATED"/>
    <property type="match status" value="1"/>
</dbReference>
<dbReference type="Pfam" id="PF13947">
    <property type="entry name" value="GUB_WAK_bind"/>
    <property type="match status" value="1"/>
</dbReference>
<dbReference type="Pfam" id="PF00069">
    <property type="entry name" value="Pkinase"/>
    <property type="match status" value="1"/>
</dbReference>
<dbReference type="Pfam" id="PF14380">
    <property type="entry name" value="WAK_assoc"/>
    <property type="match status" value="1"/>
</dbReference>
<dbReference type="SMART" id="SM00220">
    <property type="entry name" value="S_TKc"/>
    <property type="match status" value="1"/>
</dbReference>
<dbReference type="SUPFAM" id="SSF56112">
    <property type="entry name" value="Protein kinase-like (PK-like)"/>
    <property type="match status" value="1"/>
</dbReference>
<dbReference type="PROSITE" id="PS00107">
    <property type="entry name" value="PROTEIN_KINASE_ATP"/>
    <property type="match status" value="1"/>
</dbReference>
<dbReference type="PROSITE" id="PS50011">
    <property type="entry name" value="PROTEIN_KINASE_DOM"/>
    <property type="match status" value="1"/>
</dbReference>
<dbReference type="PROSITE" id="PS00108">
    <property type="entry name" value="PROTEIN_KINASE_ST"/>
    <property type="match status" value="1"/>
</dbReference>
<organism>
    <name type="scientific">Arabidopsis thaliana</name>
    <name type="common">Mouse-ear cress</name>
    <dbReference type="NCBI Taxonomy" id="3702"/>
    <lineage>
        <taxon>Eukaryota</taxon>
        <taxon>Viridiplantae</taxon>
        <taxon>Streptophyta</taxon>
        <taxon>Embryophyta</taxon>
        <taxon>Tracheophyta</taxon>
        <taxon>Spermatophyta</taxon>
        <taxon>Magnoliopsida</taxon>
        <taxon>eudicotyledons</taxon>
        <taxon>Gunneridae</taxon>
        <taxon>Pentapetalae</taxon>
        <taxon>rosids</taxon>
        <taxon>malvids</taxon>
        <taxon>Brassicales</taxon>
        <taxon>Brassicaceae</taxon>
        <taxon>Camelineae</taxon>
        <taxon>Arabidopsis</taxon>
    </lineage>
</organism>
<sequence length="617" mass="69276">MYYLPSSCLVLFLFFSLFYHLPCASSKQTLGWCESQFQCGNITAGFPFWGGNRPEVCGHPLLELHCLDNITSLTISDHLYHVLSINHTYNTLRVARTDFLQSICLSPFPFANATLPPEIFDILPTYKSVTLYRCYPVIPDLARYGCPAIGSVSVSDNLENPVSCEARFTVNIPTSFVPNEKRLNITSLVRDVRNGFEVRLRIDENSCQECSSSHKYCGFTGTLPLETKCRPLNLPTRLSSEAKIATIAGVSLLPFLVLTLVVHIIRKQKTSNDKGQQDLKEHIPKPRIKALIQLKQYSYEQVKRITNSFAEVVGRGGFGIVYRGTLSDGRMVAVKVLKDLKGNNGEDFINEVASMSQTSHVNIVTLLGFCSEGYKRAIIYEFMENGSLDKFISSKKSSTMDWRELYGIALGVARGLEYLHHGCRTRIVHFDIKPQNVLLDDNLSPKVSDFGLAKLCERKESILSLMDTRGTIGYIAPEVFSRVYGSVSHKSDVYSYGMLVLDIIGARNKTSTEDTTSSTSSMYFPEWIYKDLEKGDNGRLIVNRSEEDEIAKKMTLVGLWCIQPWPLDRPAMNRVVEMMEGNLDALEVPPRPVLQCSVVPHLDSSWISEENSISSEI</sequence>
<gene>
    <name evidence="5" type="primary">LRK10L-2.4</name>
    <name evidence="7" type="ordered locus">At1g66920</name>
    <name evidence="8" type="ORF">T4O24.7</name>
</gene>
<proteinExistence type="inferred from homology"/>